<comment type="function">
    <text evidence="1">Promotes RNA polymerase assembly. Latches the N- and C-terminal regions of the beta' subunit thereby facilitating its interaction with the beta and alpha subunits.</text>
</comment>
<comment type="catalytic activity">
    <reaction evidence="1">
        <text>RNA(n) + a ribonucleoside 5'-triphosphate = RNA(n+1) + diphosphate</text>
        <dbReference type="Rhea" id="RHEA:21248"/>
        <dbReference type="Rhea" id="RHEA-COMP:14527"/>
        <dbReference type="Rhea" id="RHEA-COMP:17342"/>
        <dbReference type="ChEBI" id="CHEBI:33019"/>
        <dbReference type="ChEBI" id="CHEBI:61557"/>
        <dbReference type="ChEBI" id="CHEBI:140395"/>
        <dbReference type="EC" id="2.7.7.6"/>
    </reaction>
</comment>
<comment type="subunit">
    <text evidence="1">The RNAP catalytic core consists of 2 alpha, 1 beta, 1 beta' and 1 omega subunit. When a sigma factor is associated with the core the holoenzyme is formed, which can initiate transcription.</text>
</comment>
<comment type="similarity">
    <text evidence="1">Belongs to the RNA polymerase subunit omega family.</text>
</comment>
<dbReference type="EC" id="2.7.7.6" evidence="1"/>
<dbReference type="EMBL" id="AM260525">
    <property type="protein sequence ID" value="CAK01195.1"/>
    <property type="molecule type" value="Genomic_DNA"/>
</dbReference>
<dbReference type="RefSeq" id="WP_012231308.1">
    <property type="nucleotide sequence ID" value="NC_010161.1"/>
</dbReference>
<dbReference type="SMR" id="A9IRL2"/>
<dbReference type="KEGG" id="btr:BT_0780"/>
<dbReference type="eggNOG" id="COG1758">
    <property type="taxonomic scope" value="Bacteria"/>
</dbReference>
<dbReference type="HOGENOM" id="CLU_125406_2_0_5"/>
<dbReference type="Proteomes" id="UP000001592">
    <property type="component" value="Chromosome"/>
</dbReference>
<dbReference type="GO" id="GO:0000428">
    <property type="term" value="C:DNA-directed RNA polymerase complex"/>
    <property type="evidence" value="ECO:0007669"/>
    <property type="project" value="UniProtKB-KW"/>
</dbReference>
<dbReference type="GO" id="GO:0003677">
    <property type="term" value="F:DNA binding"/>
    <property type="evidence" value="ECO:0007669"/>
    <property type="project" value="UniProtKB-UniRule"/>
</dbReference>
<dbReference type="GO" id="GO:0003899">
    <property type="term" value="F:DNA-directed RNA polymerase activity"/>
    <property type="evidence" value="ECO:0007669"/>
    <property type="project" value="UniProtKB-UniRule"/>
</dbReference>
<dbReference type="GO" id="GO:0006351">
    <property type="term" value="P:DNA-templated transcription"/>
    <property type="evidence" value="ECO:0007669"/>
    <property type="project" value="UniProtKB-UniRule"/>
</dbReference>
<dbReference type="Gene3D" id="3.90.940.10">
    <property type="match status" value="1"/>
</dbReference>
<dbReference type="HAMAP" id="MF_00366">
    <property type="entry name" value="RNApol_bact_RpoZ"/>
    <property type="match status" value="1"/>
</dbReference>
<dbReference type="InterPro" id="IPR003716">
    <property type="entry name" value="DNA-dir_RNA_pol_omega"/>
</dbReference>
<dbReference type="InterPro" id="IPR006110">
    <property type="entry name" value="Pol_omega/Rpo6/RPB6"/>
</dbReference>
<dbReference type="InterPro" id="IPR036161">
    <property type="entry name" value="RPB6/omega-like_sf"/>
</dbReference>
<dbReference type="NCBIfam" id="TIGR00690">
    <property type="entry name" value="rpoZ"/>
    <property type="match status" value="1"/>
</dbReference>
<dbReference type="PANTHER" id="PTHR34476">
    <property type="entry name" value="DNA-DIRECTED RNA POLYMERASE SUBUNIT OMEGA"/>
    <property type="match status" value="1"/>
</dbReference>
<dbReference type="PANTHER" id="PTHR34476:SF1">
    <property type="entry name" value="DNA-DIRECTED RNA POLYMERASE SUBUNIT OMEGA"/>
    <property type="match status" value="1"/>
</dbReference>
<dbReference type="Pfam" id="PF01192">
    <property type="entry name" value="RNA_pol_Rpb6"/>
    <property type="match status" value="1"/>
</dbReference>
<dbReference type="SMART" id="SM01409">
    <property type="entry name" value="RNA_pol_Rpb6"/>
    <property type="match status" value="1"/>
</dbReference>
<dbReference type="SUPFAM" id="SSF63562">
    <property type="entry name" value="RPB6/omega subunit-like"/>
    <property type="match status" value="1"/>
</dbReference>
<gene>
    <name evidence="1" type="primary">rpoZ</name>
    <name type="ordered locus">BT_0780</name>
</gene>
<keyword id="KW-0240">DNA-directed RNA polymerase</keyword>
<keyword id="KW-0548">Nucleotidyltransferase</keyword>
<keyword id="KW-0804">Transcription</keyword>
<keyword id="KW-0808">Transferase</keyword>
<protein>
    <recommendedName>
        <fullName evidence="1">DNA-directed RNA polymerase subunit omega</fullName>
        <shortName evidence="1">RNAP omega subunit</shortName>
        <ecNumber evidence="1">2.7.7.6</ecNumber>
    </recommendedName>
    <alternativeName>
        <fullName evidence="1">RNA polymerase omega subunit</fullName>
    </alternativeName>
    <alternativeName>
        <fullName evidence="1">Transcriptase subunit omega</fullName>
    </alternativeName>
</protein>
<proteinExistence type="inferred from homology"/>
<feature type="chain" id="PRO_1000079615" description="DNA-directed RNA polymerase subunit omega">
    <location>
        <begin position="1"/>
        <end position="132"/>
    </location>
</feature>
<feature type="region of interest" description="Disordered" evidence="2">
    <location>
        <begin position="89"/>
        <end position="109"/>
    </location>
</feature>
<feature type="compositionally biased region" description="Polar residues" evidence="2">
    <location>
        <begin position="96"/>
        <end position="105"/>
    </location>
</feature>
<evidence type="ECO:0000255" key="1">
    <source>
        <dbReference type="HAMAP-Rule" id="MF_00366"/>
    </source>
</evidence>
<evidence type="ECO:0000256" key="2">
    <source>
        <dbReference type="SAM" id="MobiDB-lite"/>
    </source>
</evidence>
<name>RPOZ_BART1</name>
<sequence>MARVTVEDCIDKVDNRFELVLLAGHRARQISQGAQITVDRDNDKNPVVALREIAEETLSPADLKEDLIHSLQKHVEVDEPEMASEFITHSSESESIFNTSSQEEGTSFDHMSEEELLAGIEGLVVPEKSDDY</sequence>
<organism>
    <name type="scientific">Bartonella tribocorum (strain CIP 105476 / IBS 506)</name>
    <dbReference type="NCBI Taxonomy" id="382640"/>
    <lineage>
        <taxon>Bacteria</taxon>
        <taxon>Pseudomonadati</taxon>
        <taxon>Pseudomonadota</taxon>
        <taxon>Alphaproteobacteria</taxon>
        <taxon>Hyphomicrobiales</taxon>
        <taxon>Bartonellaceae</taxon>
        <taxon>Bartonella</taxon>
    </lineage>
</organism>
<reference key="1">
    <citation type="journal article" date="2007" name="Nat. Genet.">
        <title>Genomic analysis of Bartonella identifies type IV secretion systems as host adaptability factors.</title>
        <authorList>
            <person name="Saenz H.L."/>
            <person name="Engel P."/>
            <person name="Stoeckli M.C."/>
            <person name="Lanz C."/>
            <person name="Raddatz G."/>
            <person name="Vayssier-Taussat M."/>
            <person name="Birtles R."/>
            <person name="Schuster S.C."/>
            <person name="Dehio C."/>
        </authorList>
    </citation>
    <scope>NUCLEOTIDE SEQUENCE [LARGE SCALE GENOMIC DNA]</scope>
    <source>
        <strain>CIP 105476 / IBS 506</strain>
    </source>
</reference>
<accession>A9IRL2</accession>